<sequence>MLKENQSKWSSAGALIAIGIVFGDIGTSPLYTMNSILNSAKSAHNLDTFVIGSVSLVFWTLMLITTIKYVIIALQADNHGEGGIFALYSRVKKPNKKWLLLPALIGGAALLADGTLTPAVTVTTAIEGLKGQGIGEFIFPNNQTIVLFVVTVILLIVFTFQKAGTKKIGKIFGPVMLTWFLFIGFFGLVNIFSDLSILKALSPTYAIAVLFSPENKTGIFILGSVFLATTGAEALYSDMGHVGKHNIYVSWIFVYTMLILNYMGQGAWIMSHANQENLLMQSSNPFFEILPSGWRIFGVVMAALAAIIASQALISGAYTLVSEAINLKVIPRLRTFYPSEARGQMYIGTVNWLLCIIGLIIVWAFQTSHNMEAAYGLSITITMLMTTLLLYQFIKQEMKNKILAFFFVVIFGMIETVFLIASLGKFLHGGYATLIIMVAILSVMMIWFYGNKRREAISQQNDYLSLKDYRKQLINLSKDNEEPIFASNLVYIVNIHQNYMLKRNIIYSILGSKPKRAETYWFVTIRSSNDPYEKSYSVDMLGTNNIVHVTLNIGFKVEPQVNMYMKQIANNLVKQNIIKPQFPKYTLNKRGTVGEFKYIMANQNYEDLLNLPDIHTWDRFIISGRLWLQSHTVKPSSFYGLEVSDVLEETVPLFIKDSNKSKIKLIQNEVKNVIKPE</sequence>
<organism>
    <name type="scientific">Leuconostoc mesenteroides subsp. mesenteroides (strain ATCC 8293 / DSM 20343 / BCRC 11652 / CCM 1803 / JCM 6124 / NCDO 523 / NBRC 100496 / NCIMB 8023 / NCTC 12954 / NRRL B-1118 / 37Y)</name>
    <dbReference type="NCBI Taxonomy" id="203120"/>
    <lineage>
        <taxon>Bacteria</taxon>
        <taxon>Bacillati</taxon>
        <taxon>Bacillota</taxon>
        <taxon>Bacilli</taxon>
        <taxon>Lactobacillales</taxon>
        <taxon>Lactobacillaceae</taxon>
        <taxon>Leuconostoc</taxon>
    </lineage>
</organism>
<dbReference type="EMBL" id="CP000414">
    <property type="protein sequence ID" value="ABJ62111.1"/>
    <property type="molecule type" value="Genomic_DNA"/>
</dbReference>
<dbReference type="RefSeq" id="WP_011679761.1">
    <property type="nucleotide sequence ID" value="NC_008531.1"/>
</dbReference>
<dbReference type="EnsemblBacteria" id="ABJ62111">
    <property type="protein sequence ID" value="ABJ62111"/>
    <property type="gene ID" value="LEUM_1011"/>
</dbReference>
<dbReference type="GeneID" id="29577197"/>
<dbReference type="KEGG" id="lme:LEUM_1011"/>
<dbReference type="eggNOG" id="COG3158">
    <property type="taxonomic scope" value="Bacteria"/>
</dbReference>
<dbReference type="HOGENOM" id="CLU_008142_4_1_9"/>
<dbReference type="Proteomes" id="UP000000362">
    <property type="component" value="Chromosome"/>
</dbReference>
<dbReference type="GO" id="GO:0005886">
    <property type="term" value="C:plasma membrane"/>
    <property type="evidence" value="ECO:0007669"/>
    <property type="project" value="UniProtKB-SubCell"/>
</dbReference>
<dbReference type="GO" id="GO:0015079">
    <property type="term" value="F:potassium ion transmembrane transporter activity"/>
    <property type="evidence" value="ECO:0007669"/>
    <property type="project" value="UniProtKB-UniRule"/>
</dbReference>
<dbReference type="GO" id="GO:0015293">
    <property type="term" value="F:symporter activity"/>
    <property type="evidence" value="ECO:0007669"/>
    <property type="project" value="UniProtKB-UniRule"/>
</dbReference>
<dbReference type="HAMAP" id="MF_01522">
    <property type="entry name" value="Kup"/>
    <property type="match status" value="1"/>
</dbReference>
<dbReference type="InterPro" id="IPR003855">
    <property type="entry name" value="K+_transporter"/>
</dbReference>
<dbReference type="InterPro" id="IPR053952">
    <property type="entry name" value="K_trans_C"/>
</dbReference>
<dbReference type="InterPro" id="IPR053951">
    <property type="entry name" value="K_trans_N"/>
</dbReference>
<dbReference type="InterPro" id="IPR023051">
    <property type="entry name" value="Kup"/>
</dbReference>
<dbReference type="PANTHER" id="PTHR30540:SF83">
    <property type="entry name" value="K+ POTASSIUM TRANSPORTER"/>
    <property type="match status" value="1"/>
</dbReference>
<dbReference type="PANTHER" id="PTHR30540">
    <property type="entry name" value="OSMOTIC STRESS POTASSIUM TRANSPORTER"/>
    <property type="match status" value="1"/>
</dbReference>
<dbReference type="Pfam" id="PF02705">
    <property type="entry name" value="K_trans"/>
    <property type="match status" value="1"/>
</dbReference>
<dbReference type="Pfam" id="PF22776">
    <property type="entry name" value="K_trans_C"/>
    <property type="match status" value="1"/>
</dbReference>
<accession>Q03XG1</accession>
<comment type="function">
    <text evidence="1">Transport of potassium into the cell. Likely operates as a K(+):H(+) symporter.</text>
</comment>
<comment type="catalytic activity">
    <reaction evidence="1">
        <text>K(+)(in) + H(+)(in) = K(+)(out) + H(+)(out)</text>
        <dbReference type="Rhea" id="RHEA:28490"/>
        <dbReference type="ChEBI" id="CHEBI:15378"/>
        <dbReference type="ChEBI" id="CHEBI:29103"/>
    </reaction>
    <physiologicalReaction direction="right-to-left" evidence="1">
        <dbReference type="Rhea" id="RHEA:28492"/>
    </physiologicalReaction>
</comment>
<comment type="subcellular location">
    <subcellularLocation>
        <location evidence="1">Cell membrane</location>
        <topology evidence="1">Multi-pass membrane protein</topology>
    </subcellularLocation>
</comment>
<comment type="similarity">
    <text evidence="1">Belongs to the HAK/KUP transporter (TC 2.A.72) family.</text>
</comment>
<evidence type="ECO:0000255" key="1">
    <source>
        <dbReference type="HAMAP-Rule" id="MF_01522"/>
    </source>
</evidence>
<name>KUP_LEUMM</name>
<keyword id="KW-1003">Cell membrane</keyword>
<keyword id="KW-0406">Ion transport</keyword>
<keyword id="KW-0472">Membrane</keyword>
<keyword id="KW-0630">Potassium</keyword>
<keyword id="KW-0633">Potassium transport</keyword>
<keyword id="KW-1185">Reference proteome</keyword>
<keyword id="KW-0769">Symport</keyword>
<keyword id="KW-0812">Transmembrane</keyword>
<keyword id="KW-1133">Transmembrane helix</keyword>
<keyword id="KW-0813">Transport</keyword>
<proteinExistence type="inferred from homology"/>
<reference key="1">
    <citation type="journal article" date="2006" name="Proc. Natl. Acad. Sci. U.S.A.">
        <title>Comparative genomics of the lactic acid bacteria.</title>
        <authorList>
            <person name="Makarova K.S."/>
            <person name="Slesarev A."/>
            <person name="Wolf Y.I."/>
            <person name="Sorokin A."/>
            <person name="Mirkin B."/>
            <person name="Koonin E.V."/>
            <person name="Pavlov A."/>
            <person name="Pavlova N."/>
            <person name="Karamychev V."/>
            <person name="Polouchine N."/>
            <person name="Shakhova V."/>
            <person name="Grigoriev I."/>
            <person name="Lou Y."/>
            <person name="Rohksar D."/>
            <person name="Lucas S."/>
            <person name="Huang K."/>
            <person name="Goodstein D.M."/>
            <person name="Hawkins T."/>
            <person name="Plengvidhya V."/>
            <person name="Welker D."/>
            <person name="Hughes J."/>
            <person name="Goh Y."/>
            <person name="Benson A."/>
            <person name="Baldwin K."/>
            <person name="Lee J.-H."/>
            <person name="Diaz-Muniz I."/>
            <person name="Dosti B."/>
            <person name="Smeianov V."/>
            <person name="Wechter W."/>
            <person name="Barabote R."/>
            <person name="Lorca G."/>
            <person name="Altermann E."/>
            <person name="Barrangou R."/>
            <person name="Ganesan B."/>
            <person name="Xie Y."/>
            <person name="Rawsthorne H."/>
            <person name="Tamir D."/>
            <person name="Parker C."/>
            <person name="Breidt F."/>
            <person name="Broadbent J.R."/>
            <person name="Hutkins R."/>
            <person name="O'Sullivan D."/>
            <person name="Steele J."/>
            <person name="Unlu G."/>
            <person name="Saier M.H. Jr."/>
            <person name="Klaenhammer T."/>
            <person name="Richardson P."/>
            <person name="Kozyavkin S."/>
            <person name="Weimer B.C."/>
            <person name="Mills D.A."/>
        </authorList>
    </citation>
    <scope>NUCLEOTIDE SEQUENCE [LARGE SCALE GENOMIC DNA]</scope>
    <source>
        <strain>ATCC 8293 / DSM 20343 / BCRC 11652 / CCM 1803 / JCM 6124 / NCDO 523 / NBRC 100496 / NCIMB 8023 / NCTC 12954 / NRRL B-1118 / 37Y</strain>
    </source>
</reference>
<protein>
    <recommendedName>
        <fullName evidence="1">Probable potassium transport system protein Kup</fullName>
    </recommendedName>
</protein>
<feature type="chain" id="PRO_0000279798" description="Probable potassium transport system protein Kup">
    <location>
        <begin position="1"/>
        <end position="677"/>
    </location>
</feature>
<feature type="transmembrane region" description="Helical" evidence="1">
    <location>
        <begin position="13"/>
        <end position="33"/>
    </location>
</feature>
<feature type="transmembrane region" description="Helical" evidence="1">
    <location>
        <begin position="54"/>
        <end position="74"/>
    </location>
</feature>
<feature type="transmembrane region" description="Helical" evidence="1">
    <location>
        <begin position="98"/>
        <end position="118"/>
    </location>
</feature>
<feature type="transmembrane region" description="Helical" evidence="1">
    <location>
        <begin position="137"/>
        <end position="157"/>
    </location>
</feature>
<feature type="transmembrane region" description="Helical" evidence="1">
    <location>
        <begin position="171"/>
        <end position="191"/>
    </location>
</feature>
<feature type="transmembrane region" description="Helical" evidence="1">
    <location>
        <begin position="217"/>
        <end position="237"/>
    </location>
</feature>
<feature type="transmembrane region" description="Helical" evidence="1">
    <location>
        <begin position="249"/>
        <end position="269"/>
    </location>
</feature>
<feature type="transmembrane region" description="Helical" evidence="1">
    <location>
        <begin position="296"/>
        <end position="316"/>
    </location>
</feature>
<feature type="transmembrane region" description="Helical" evidence="1">
    <location>
        <begin position="345"/>
        <end position="365"/>
    </location>
</feature>
<feature type="transmembrane region" description="Helical" evidence="1">
    <location>
        <begin position="374"/>
        <end position="394"/>
    </location>
</feature>
<feature type="transmembrane region" description="Helical" evidence="1">
    <location>
        <begin position="402"/>
        <end position="422"/>
    </location>
</feature>
<feature type="transmembrane region" description="Helical" evidence="1">
    <location>
        <begin position="429"/>
        <end position="449"/>
    </location>
</feature>
<gene>
    <name evidence="1" type="primary">kup</name>
    <name type="ordered locus">LEUM_1011</name>
</gene>